<dbReference type="EC" id="1.2.7.4"/>
<dbReference type="EMBL" id="M62727">
    <property type="protein sequence ID" value="AAA23228.1"/>
    <property type="molecule type" value="Genomic_DNA"/>
</dbReference>
<dbReference type="PIR" id="A41670">
    <property type="entry name" value="A41670"/>
</dbReference>
<dbReference type="RefSeq" id="WP_011392717.1">
    <property type="nucleotide sequence ID" value="NZ_BSDM01000001.1"/>
</dbReference>
<dbReference type="PDB" id="1MJG">
    <property type="method" value="X-ray"/>
    <property type="resolution" value="2.20 A"/>
    <property type="chains" value="A/B/C/D=1-674"/>
</dbReference>
<dbReference type="PDB" id="1OAO">
    <property type="method" value="X-ray"/>
    <property type="resolution" value="1.90 A"/>
    <property type="chains" value="A/B=1-674"/>
</dbReference>
<dbReference type="PDB" id="2Z8Y">
    <property type="method" value="X-ray"/>
    <property type="resolution" value="2.51 A"/>
    <property type="chains" value="A/B/C/D=1-674"/>
</dbReference>
<dbReference type="PDB" id="3I01">
    <property type="method" value="X-ray"/>
    <property type="resolution" value="2.15 A"/>
    <property type="chains" value="A/B/C/D=1-674"/>
</dbReference>
<dbReference type="PDB" id="3I04">
    <property type="method" value="X-ray"/>
    <property type="resolution" value="2.15 A"/>
    <property type="chains" value="A/B/C/D=2-674"/>
</dbReference>
<dbReference type="PDB" id="6X5K">
    <property type="method" value="X-ray"/>
    <property type="resolution" value="2.47 A"/>
    <property type="chains" value="A/B/C/D=1-674"/>
</dbReference>
<dbReference type="PDBsum" id="1MJG"/>
<dbReference type="PDBsum" id="1OAO"/>
<dbReference type="PDBsum" id="2Z8Y"/>
<dbReference type="PDBsum" id="3I01"/>
<dbReference type="PDBsum" id="3I04"/>
<dbReference type="PDBsum" id="6X5K"/>
<dbReference type="SMR" id="P27989"/>
<dbReference type="OMA" id="YINIMPT"/>
<dbReference type="BioCyc" id="MetaCyc:CODHBETACLTH-MONOMER"/>
<dbReference type="BRENDA" id="1.2.7.4">
    <property type="organism ID" value="1528"/>
</dbReference>
<dbReference type="BRENDA" id="2.3.1.169">
    <property type="organism ID" value="1528"/>
</dbReference>
<dbReference type="EvolutionaryTrace" id="P27989"/>
<dbReference type="GO" id="GO:0051539">
    <property type="term" value="F:4 iron, 4 sulfur cluster binding"/>
    <property type="evidence" value="ECO:0007669"/>
    <property type="project" value="UniProtKB-KW"/>
</dbReference>
<dbReference type="GO" id="GO:0043885">
    <property type="term" value="F:anaerobic carbon-monoxide dehydrogenase activity"/>
    <property type="evidence" value="ECO:0007669"/>
    <property type="project" value="UniProtKB-EC"/>
</dbReference>
<dbReference type="GO" id="GO:0050418">
    <property type="term" value="F:hydroxylamine reductase activity"/>
    <property type="evidence" value="ECO:0007669"/>
    <property type="project" value="TreeGrafter"/>
</dbReference>
<dbReference type="GO" id="GO:0016151">
    <property type="term" value="F:nickel cation binding"/>
    <property type="evidence" value="ECO:0007669"/>
    <property type="project" value="InterPro"/>
</dbReference>
<dbReference type="GO" id="GO:0004601">
    <property type="term" value="F:peroxidase activity"/>
    <property type="evidence" value="ECO:0007669"/>
    <property type="project" value="TreeGrafter"/>
</dbReference>
<dbReference type="GO" id="GO:0015977">
    <property type="term" value="P:carbon fixation"/>
    <property type="evidence" value="ECO:0007669"/>
    <property type="project" value="UniProtKB-KW"/>
</dbReference>
<dbReference type="GO" id="GO:0006091">
    <property type="term" value="P:generation of precursor metabolites and energy"/>
    <property type="evidence" value="ECO:0007669"/>
    <property type="project" value="InterPro"/>
</dbReference>
<dbReference type="GO" id="GO:0042542">
    <property type="term" value="P:response to hydrogen peroxide"/>
    <property type="evidence" value="ECO:0007669"/>
    <property type="project" value="TreeGrafter"/>
</dbReference>
<dbReference type="CDD" id="cd01915">
    <property type="entry name" value="CODH"/>
    <property type="match status" value="1"/>
</dbReference>
<dbReference type="Gene3D" id="1.20.1270.30">
    <property type="match status" value="1"/>
</dbReference>
<dbReference type="Gene3D" id="3.40.50.2030">
    <property type="match status" value="2"/>
</dbReference>
<dbReference type="InterPro" id="IPR016101">
    <property type="entry name" value="CO_DH_a-bundle"/>
</dbReference>
<dbReference type="InterPro" id="IPR010047">
    <property type="entry name" value="CODH"/>
</dbReference>
<dbReference type="InterPro" id="IPR004137">
    <property type="entry name" value="HCP/CODH"/>
</dbReference>
<dbReference type="InterPro" id="IPR016099">
    <property type="entry name" value="Prismane-like_a/b-sand"/>
</dbReference>
<dbReference type="InterPro" id="IPR011254">
    <property type="entry name" value="Prismane-like_sf"/>
</dbReference>
<dbReference type="NCBIfam" id="TIGR01702">
    <property type="entry name" value="CO_DH_cata"/>
    <property type="match status" value="1"/>
</dbReference>
<dbReference type="PANTHER" id="PTHR30109:SF4">
    <property type="entry name" value="CARBON MONOXIDE DEHYDROGENASE"/>
    <property type="match status" value="1"/>
</dbReference>
<dbReference type="PANTHER" id="PTHR30109">
    <property type="entry name" value="HYDROXYLAMINE REDUCTASE"/>
    <property type="match status" value="1"/>
</dbReference>
<dbReference type="Pfam" id="PF03063">
    <property type="entry name" value="Prismane"/>
    <property type="match status" value="1"/>
</dbReference>
<dbReference type="PIRSF" id="PIRSF005023">
    <property type="entry name" value="CODH"/>
    <property type="match status" value="1"/>
</dbReference>
<dbReference type="SUPFAM" id="SSF56821">
    <property type="entry name" value="Prismane protein-like"/>
    <property type="match status" value="1"/>
</dbReference>
<sequence>MPRFRDLSHNCRPSEAPRVMEPKNRDRTVDPAVLEMLVKSKDDKVITAFDRFVAQQPQCKIGYEGICCRFCMAGPCRIKATDGPGSRGICGASAWTIVARNVGLMILTGAAAHCEHGNHIAHALVEMAEGKAPDYSVKDEAKLKEVCRRVGIEVEGKSVLELAQEVGEKALEDFRRLKGEGEATWLMTTINEGRKEKFRTHNVVPFGIHASISELVNQAHMGMDNDPVNLVFSAIRVALADYTGEHIATDFSDILFGTPQPVVSEANMGVLDPDQVNFVLHGHNPLLSEIIVQAAREMEGEAKAAGAKGINLVGICCTGNEVLMRQGIPLVTSFASQELAICTGAIDAMCVDVQCIMPSISAVAECYHTRIITTADNAKIPGAYHIDYQTATAIESAKTAIRMAIEAFKERKESNRPVYIPQIKNRVVAGWSLEALTKLLATQNAQNPIRVLNQAILDGELAGVALICGCNNLKGFQDNSHLTVMKELLKNNVFVVATGCSAQAAGKLGLLDPANVETYCGDGLKGFLKRLGEGANIEIGLPPVFHMGSCVDNSRAVDLLMAMANDLGVDTPKVPFVASAPEAMSGKAAAIGTWWVSLGVPTHVGTMPPVEGSDLIYSILTQIASDVYGGYFIFEMDPQVAARKILDALEYRTWKLGVHKEVAERYETKLCQGY</sequence>
<keyword id="KW-0002">3D-structure</keyword>
<keyword id="KW-0004">4Fe-4S</keyword>
<keyword id="KW-0120">Carbon dioxide fixation</keyword>
<keyword id="KW-0249">Electron transport</keyword>
<keyword id="KW-0408">Iron</keyword>
<keyword id="KW-0411">Iron-sulfur</keyword>
<keyword id="KW-0479">Metal-binding</keyword>
<keyword id="KW-0533">Nickel</keyword>
<keyword id="KW-0560">Oxidoreductase</keyword>
<keyword id="KW-0813">Transport</keyword>
<comment type="function">
    <text evidence="2 3">The beta subunit (this protein) generates CO from CO(2), while the alpha subunit combines the CO with CoA and a methyl group to form acetyl-CoA. The methyl group, which is incorporated into acetyl-CoA, is transferred to the alpha subunit by a corrinoid iron-sulfur protein.</text>
</comment>
<comment type="catalytic activity">
    <reaction evidence="3">
        <text>CO + 2 oxidized [2Fe-2S]-[ferredoxin] + H2O = 2 reduced [2Fe-2S]-[ferredoxin] + CO2 + 2 H(+)</text>
        <dbReference type="Rhea" id="RHEA:21040"/>
        <dbReference type="Rhea" id="RHEA-COMP:10000"/>
        <dbReference type="Rhea" id="RHEA-COMP:10001"/>
        <dbReference type="ChEBI" id="CHEBI:15377"/>
        <dbReference type="ChEBI" id="CHEBI:15378"/>
        <dbReference type="ChEBI" id="CHEBI:16526"/>
        <dbReference type="ChEBI" id="CHEBI:17245"/>
        <dbReference type="ChEBI" id="CHEBI:33737"/>
        <dbReference type="ChEBI" id="CHEBI:33738"/>
        <dbReference type="EC" id="1.2.7.4"/>
    </reaction>
</comment>
<comment type="cofactor">
    <cofactor>
        <name>[Ni-Fe-S] cluster</name>
        <dbReference type="ChEBI" id="CHEBI:60400"/>
    </cofactor>
    <text>Binds 1 [Ni-Fe-S] cluster per subunit.</text>
</comment>
<comment type="cofactor">
    <cofactor>
        <name>[4Fe-4S] cluster</name>
        <dbReference type="ChEBI" id="CHEBI:49883"/>
    </cofactor>
    <text>Binds 2 [4Fe-4S] clusters per homodimer.</text>
</comment>
<comment type="subunit">
    <text>Tetramer of two alpha and two beta chains.</text>
</comment>
<feature type="chain" id="PRO_0000079808" description="Carbon monoxide dehydrogenase/acetyl-CoA synthase subunit beta">
    <location>
        <begin position="1"/>
        <end position="674"/>
    </location>
</feature>
<feature type="region of interest" description="Disordered" evidence="1">
    <location>
        <begin position="1"/>
        <end position="25"/>
    </location>
</feature>
<feature type="binding site">
    <location>
        <position position="59"/>
    </location>
    <ligand>
        <name>[4Fe-4S] cluster</name>
        <dbReference type="ChEBI" id="CHEBI:49883"/>
        <label>1</label>
        <note>ligand shared between dimeric partners</note>
    </ligand>
</feature>
<feature type="binding site">
    <location>
        <position position="67"/>
    </location>
    <ligand>
        <name>[4Fe-4S] cluster</name>
        <dbReference type="ChEBI" id="CHEBI:49883"/>
        <label>1</label>
        <note>ligand shared between dimeric partners</note>
    </ligand>
</feature>
<feature type="binding site">
    <location>
        <position position="68"/>
    </location>
    <ligand>
        <name>[4Fe-4S] cluster</name>
        <dbReference type="ChEBI" id="CHEBI:49883"/>
        <label>2</label>
    </ligand>
</feature>
<feature type="binding site">
    <location>
        <position position="71"/>
    </location>
    <ligand>
        <name>[4Fe-4S] cluster</name>
        <dbReference type="ChEBI" id="CHEBI:49883"/>
        <label>2</label>
    </ligand>
</feature>
<feature type="binding site">
    <location>
        <position position="76"/>
    </location>
    <ligand>
        <name>[4Fe-4S] cluster</name>
        <dbReference type="ChEBI" id="CHEBI:49883"/>
        <label>2</label>
    </ligand>
</feature>
<feature type="binding site">
    <location>
        <position position="90"/>
    </location>
    <ligand>
        <name>[4Fe-4S] cluster</name>
        <dbReference type="ChEBI" id="CHEBI:49883"/>
        <label>2</label>
    </ligand>
</feature>
<feature type="binding site">
    <location>
        <position position="283"/>
    </location>
    <ligand>
        <name>[Ni-4Fe-4S] cluster</name>
        <dbReference type="ChEBI" id="CHEBI:47739"/>
    </ligand>
</feature>
<feature type="binding site">
    <location>
        <position position="317"/>
    </location>
    <ligand>
        <name>[Ni-4Fe-4S] cluster</name>
        <dbReference type="ChEBI" id="CHEBI:47739"/>
    </ligand>
</feature>
<feature type="binding site">
    <location>
        <position position="355"/>
    </location>
    <ligand>
        <name>[Ni-4Fe-4S] cluster</name>
        <dbReference type="ChEBI" id="CHEBI:47739"/>
    </ligand>
</feature>
<feature type="binding site">
    <location>
        <position position="470"/>
    </location>
    <ligand>
        <name>[Ni-4Fe-4S] cluster</name>
        <dbReference type="ChEBI" id="CHEBI:47739"/>
    </ligand>
</feature>
<feature type="binding site">
    <location>
        <position position="500"/>
    </location>
    <ligand>
        <name>[Ni-4Fe-4S] cluster</name>
        <dbReference type="ChEBI" id="CHEBI:47739"/>
    </ligand>
</feature>
<feature type="binding site">
    <location>
        <position position="550"/>
    </location>
    <ligand>
        <name>[Ni-4Fe-4S] cluster</name>
        <dbReference type="ChEBI" id="CHEBI:47739"/>
    </ligand>
</feature>
<feature type="strand" evidence="4">
    <location>
        <begin position="18"/>
        <end position="21"/>
    </location>
</feature>
<feature type="helix" evidence="4">
    <location>
        <begin position="31"/>
        <end position="43"/>
    </location>
</feature>
<feature type="helix" evidence="4">
    <location>
        <begin position="48"/>
        <end position="55"/>
    </location>
</feature>
<feature type="helix" evidence="4">
    <location>
        <begin position="60"/>
        <end position="63"/>
    </location>
</feature>
<feature type="strand" evidence="4">
    <location>
        <begin position="81"/>
        <end position="83"/>
    </location>
</feature>
<feature type="helix" evidence="4">
    <location>
        <begin position="94"/>
        <end position="128"/>
    </location>
</feature>
<feature type="helix" evidence="4">
    <location>
        <begin position="140"/>
        <end position="149"/>
    </location>
</feature>
<feature type="helix" evidence="4">
    <location>
        <begin position="159"/>
        <end position="175"/>
    </location>
</feature>
<feature type="helix" evidence="4">
    <location>
        <begin position="184"/>
        <end position="187"/>
    </location>
</feature>
<feature type="helix" evidence="4">
    <location>
        <begin position="192"/>
        <end position="200"/>
    </location>
</feature>
<feature type="helix" evidence="4">
    <location>
        <begin position="208"/>
        <end position="218"/>
    </location>
</feature>
<feature type="helix" evidence="4">
    <location>
        <begin position="227"/>
        <end position="256"/>
    </location>
</feature>
<feature type="strand" evidence="4">
    <location>
        <begin position="262"/>
        <end position="267"/>
    </location>
</feature>
<feature type="helix" evidence="4">
    <location>
        <begin position="268"/>
        <end position="270"/>
    </location>
</feature>
<feature type="strand" evidence="4">
    <location>
        <begin position="275"/>
        <end position="283"/>
    </location>
</feature>
<feature type="helix" evidence="4">
    <location>
        <begin position="285"/>
        <end position="297"/>
    </location>
</feature>
<feature type="helix" evidence="4">
    <location>
        <begin position="299"/>
        <end position="304"/>
    </location>
</feature>
<feature type="strand" evidence="4">
    <location>
        <begin position="310"/>
        <end position="315"/>
    </location>
</feature>
<feature type="helix" evidence="4">
    <location>
        <begin position="316"/>
        <end position="326"/>
    </location>
</feature>
<feature type="strand" evidence="4">
    <location>
        <begin position="330"/>
        <end position="332"/>
    </location>
</feature>
<feature type="helix" evidence="4">
    <location>
        <begin position="334"/>
        <end position="336"/>
    </location>
</feature>
<feature type="helix" evidence="4">
    <location>
        <begin position="337"/>
        <end position="341"/>
    </location>
</feature>
<feature type="strand" evidence="4">
    <location>
        <begin position="347"/>
        <end position="351"/>
    </location>
</feature>
<feature type="strand" evidence="4">
    <location>
        <begin position="353"/>
        <end position="355"/>
    </location>
</feature>
<feature type="helix" evidence="4">
    <location>
        <begin position="360"/>
        <end position="364"/>
    </location>
</feature>
<feature type="turn" evidence="5">
    <location>
        <begin position="365"/>
        <end position="368"/>
    </location>
</feature>
<feature type="strand" evidence="4">
    <location>
        <begin position="370"/>
        <end position="373"/>
    </location>
</feature>
<feature type="strand" evidence="4">
    <location>
        <begin position="383"/>
        <end position="385"/>
    </location>
</feature>
<feature type="helix" evidence="4">
    <location>
        <begin position="390"/>
        <end position="392"/>
    </location>
</feature>
<feature type="helix" evidence="4">
    <location>
        <begin position="393"/>
        <end position="412"/>
    </location>
</feature>
<feature type="strand" evidence="4">
    <location>
        <begin position="414"/>
        <end position="416"/>
    </location>
</feature>
<feature type="strand" evidence="4">
    <location>
        <begin position="425"/>
        <end position="429"/>
    </location>
</feature>
<feature type="helix" evidence="4">
    <location>
        <begin position="433"/>
        <end position="441"/>
    </location>
</feature>
<feature type="helix" evidence="4">
    <location>
        <begin position="449"/>
        <end position="457"/>
    </location>
</feature>
<feature type="strand" evidence="4">
    <location>
        <begin position="463"/>
        <end position="467"/>
    </location>
</feature>
<feature type="helix" evidence="4">
    <location>
        <begin position="479"/>
        <end position="490"/>
    </location>
</feature>
<feature type="strand" evidence="4">
    <location>
        <begin position="493"/>
        <end position="498"/>
    </location>
</feature>
<feature type="helix" evidence="4">
    <location>
        <begin position="499"/>
        <end position="507"/>
    </location>
</feature>
<feature type="turn" evidence="4">
    <location>
        <begin position="508"/>
        <end position="511"/>
    </location>
</feature>
<feature type="helix" evidence="4">
    <location>
        <begin position="513"/>
        <end position="515"/>
    </location>
</feature>
<feature type="helix" evidence="4">
    <location>
        <begin position="516"/>
        <end position="519"/>
    </location>
</feature>
<feature type="helix" evidence="4">
    <location>
        <begin position="522"/>
        <end position="534"/>
    </location>
</feature>
<feature type="strand" evidence="4">
    <location>
        <begin position="543"/>
        <end position="549"/>
    </location>
</feature>
<feature type="helix" evidence="4">
    <location>
        <begin position="550"/>
        <end position="552"/>
    </location>
</feature>
<feature type="helix" evidence="4">
    <location>
        <begin position="553"/>
        <end position="567"/>
    </location>
</feature>
<feature type="helix" evidence="4">
    <location>
        <begin position="571"/>
        <end position="573"/>
    </location>
</feature>
<feature type="strand" evidence="4">
    <location>
        <begin position="576"/>
        <end position="580"/>
    </location>
</feature>
<feature type="helix" evidence="4">
    <location>
        <begin position="586"/>
        <end position="597"/>
    </location>
</feature>
<feature type="strand" evidence="4">
    <location>
        <begin position="601"/>
        <end position="606"/>
    </location>
</feature>
<feature type="turn" evidence="5">
    <location>
        <begin position="609"/>
        <end position="612"/>
    </location>
</feature>
<feature type="helix" evidence="4">
    <location>
        <begin position="614"/>
        <end position="621"/>
    </location>
</feature>
<feature type="helix" evidence="4">
    <location>
        <begin position="623"/>
        <end position="627"/>
    </location>
</feature>
<feature type="strand" evidence="4">
    <location>
        <begin position="631"/>
        <end position="634"/>
    </location>
</feature>
<feature type="helix" evidence="4">
    <location>
        <begin position="638"/>
        <end position="666"/>
    </location>
</feature>
<proteinExistence type="evidence at protein level"/>
<name>DCMB_MOOTH</name>
<reference key="1">
    <citation type="journal article" date="1991" name="J. Biol. Chem.">
        <title>The primary structure of the subunits of carbon monoxide dehydrogenase/acetyl-CoA synthase from Clostridium thermoaceticum.</title>
        <authorList>
            <person name="Morton T.A."/>
            <person name="Runquist J.A."/>
            <person name="Ragsdale S.W."/>
            <person name="Shanmugasundaram T."/>
            <person name="Wood H.G."/>
            <person name="Ljungdahl L.G."/>
        </authorList>
    </citation>
    <scope>NUCLEOTIDE SEQUENCE [GENOMIC DNA]</scope>
</reference>
<reference key="2">
    <citation type="journal article" date="2002" name="Science">
        <title>A Ni-Fe-Cu center in a bifunctional carbon monoxide dehydrogenase/acetyl-CoA synthase.</title>
        <authorList>
            <person name="Doukov T.I."/>
            <person name="Iverson T.M."/>
            <person name="Seravalli J."/>
            <person name="Ragsdale S.W."/>
            <person name="Drennan C.L."/>
        </authorList>
    </citation>
    <scope>X-RAY CRYSTALLOGRAPHY (2.2 ANGSTROMS)</scope>
    <scope>FUNCTION</scope>
    <scope>CATALYTIC ACTIVITY</scope>
    <scope>REACTION MECHANISM</scope>
</reference>
<reference key="3">
    <citation type="journal article" date="2003" name="Nat. Struct. Biol.">
        <title>Ni-Zn-[Fe4-S4] and Ni-Ni-[Fe4-S4] clusters in closed and open subunits of acetyl-CoA synthase/carbon monoxide dehydrogenase.</title>
        <authorList>
            <person name="Darnault C."/>
            <person name="Volbeda A."/>
            <person name="Kim E.J."/>
            <person name="Legrand P."/>
            <person name="Vernede X."/>
            <person name="Lindahl P.A."/>
            <person name="Fontecilla-Camps J.-C."/>
        </authorList>
    </citation>
    <scope>X-RAY CRYSTALLOGRAPHY (1.9 ANGSTROMS)</scope>
    <scope>REACTION MECHANISM</scope>
</reference>
<accession>P27989</accession>
<evidence type="ECO:0000256" key="1">
    <source>
        <dbReference type="SAM" id="MobiDB-lite"/>
    </source>
</evidence>
<evidence type="ECO:0000269" key="2">
    <source>
    </source>
</evidence>
<evidence type="ECO:0000269" key="3">
    <source>
    </source>
</evidence>
<evidence type="ECO:0007829" key="4">
    <source>
        <dbReference type="PDB" id="1OAO"/>
    </source>
</evidence>
<evidence type="ECO:0007829" key="5">
    <source>
        <dbReference type="PDB" id="3I01"/>
    </source>
</evidence>
<protein>
    <recommendedName>
        <fullName>Carbon monoxide dehydrogenase/acetyl-CoA synthase subunit beta</fullName>
        <shortName>CODH subunit</shortName>
        <shortName>CODH/ACS</shortName>
        <shortName>Carbon monoxide dehydrogenase subunit</shortName>
        <ecNumber>1.2.7.4</ecNumber>
    </recommendedName>
</protein>
<organism>
    <name type="scientific">Moorella thermoacetica</name>
    <name type="common">Clostridium thermoaceticum</name>
    <dbReference type="NCBI Taxonomy" id="1525"/>
    <lineage>
        <taxon>Bacteria</taxon>
        <taxon>Bacillati</taxon>
        <taxon>Bacillota</taxon>
        <taxon>Clostridia</taxon>
        <taxon>Moorellales</taxon>
        <taxon>Moorellaceae</taxon>
        <taxon>Moorella</taxon>
    </lineage>
</organism>